<sequence>MAKMLKFGEDARRSMQIGVDKLADTVKVTLGPKGRNVVLDKKFGAPLITNDGVSIAREIELEDPYENMGAQLVKEVATKTNDVAGDGTTTATLLAQAIIREGLKNVTAGANPILIRTGIKMAVDKAVEEIQKISKQVDGKEDIARVAAISAADEEVGKLIADAMEKVGNEGVITIEESKSMGTELDVVEGMQFDRGYVSPYMATDTEKMEAVLENPYILITDKKISNIQEILPVLEQIVQSGKKLLIIAEDIEGEAMATLVVNKLRGTFTCVAVKAPGFGDRRKEMLQDIATLTGGTVIAEELGRELKDVTIDMLGTADSVKVSKENTVIVNGKGDSNAIKERINQIKAQIEETSSEFDKEKLQERLAKLAGGVAVIKVGAATETELKEKKLRIEDALAATKAAVEEGIVAGGGTAYVNVINEVAKLTSDVADTQIGINIIVKSLEEPVRQIATNAGVEGSVIIEKVKNSEPGIGYDALHGEYINMIKGGIVDPTKVTRSALQNAASVASTFLTTEAAVADIPAKETPMPGAPGMGMDGMY</sequence>
<evidence type="ECO:0000255" key="1">
    <source>
        <dbReference type="HAMAP-Rule" id="MF_00600"/>
    </source>
</evidence>
<proteinExistence type="inferred from homology"/>
<reference key="1">
    <citation type="submission" date="2007-06" db="EMBL/GenBank/DDBJ databases">
        <title>Complete sequence of Clostridium beijerinckii NCIMB 8052.</title>
        <authorList>
            <consortium name="US DOE Joint Genome Institute"/>
            <person name="Copeland A."/>
            <person name="Lucas S."/>
            <person name="Lapidus A."/>
            <person name="Barry K."/>
            <person name="Detter J.C."/>
            <person name="Glavina del Rio T."/>
            <person name="Hammon N."/>
            <person name="Israni S."/>
            <person name="Dalin E."/>
            <person name="Tice H."/>
            <person name="Pitluck S."/>
            <person name="Sims D."/>
            <person name="Brettin T."/>
            <person name="Bruce D."/>
            <person name="Tapia R."/>
            <person name="Brainard J."/>
            <person name="Schmutz J."/>
            <person name="Larimer F."/>
            <person name="Land M."/>
            <person name="Hauser L."/>
            <person name="Kyrpides N."/>
            <person name="Mikhailova N."/>
            <person name="Bennet G."/>
            <person name="Cann I."/>
            <person name="Chen J.-S."/>
            <person name="Contreras A.L."/>
            <person name="Jones D."/>
            <person name="Kashket E."/>
            <person name="Mitchell W."/>
            <person name="Stoddard S."/>
            <person name="Schwarz W."/>
            <person name="Qureshi N."/>
            <person name="Young M."/>
            <person name="Shi Z."/>
            <person name="Ezeji T."/>
            <person name="White B."/>
            <person name="Blaschek H."/>
            <person name="Richardson P."/>
        </authorList>
    </citation>
    <scope>NUCLEOTIDE SEQUENCE [LARGE SCALE GENOMIC DNA]</scope>
    <source>
        <strain>ATCC 51743 / NCIMB 8052</strain>
    </source>
</reference>
<organism>
    <name type="scientific">Clostridium beijerinckii (strain ATCC 51743 / NCIMB 8052)</name>
    <name type="common">Clostridium acetobutylicum</name>
    <dbReference type="NCBI Taxonomy" id="290402"/>
    <lineage>
        <taxon>Bacteria</taxon>
        <taxon>Bacillati</taxon>
        <taxon>Bacillota</taxon>
        <taxon>Clostridia</taxon>
        <taxon>Eubacteriales</taxon>
        <taxon>Clostridiaceae</taxon>
        <taxon>Clostridium</taxon>
    </lineage>
</organism>
<protein>
    <recommendedName>
        <fullName evidence="1">Chaperonin GroEL</fullName>
        <ecNumber evidence="1">5.6.1.7</ecNumber>
    </recommendedName>
    <alternativeName>
        <fullName evidence="1">60 kDa chaperonin</fullName>
    </alternativeName>
    <alternativeName>
        <fullName evidence="1">Chaperonin-60</fullName>
        <shortName evidence="1">Cpn60</shortName>
    </alternativeName>
</protein>
<name>CH60_CLOB8</name>
<keyword id="KW-0067">ATP-binding</keyword>
<keyword id="KW-0143">Chaperone</keyword>
<keyword id="KW-0963">Cytoplasm</keyword>
<keyword id="KW-0413">Isomerase</keyword>
<keyword id="KW-0547">Nucleotide-binding</keyword>
<dbReference type="EC" id="5.6.1.7" evidence="1"/>
<dbReference type="EMBL" id="CP000721">
    <property type="protein sequence ID" value="ABR32517.1"/>
    <property type="molecule type" value="Genomic_DNA"/>
</dbReference>
<dbReference type="RefSeq" id="WP_011967678.1">
    <property type="nucleotide sequence ID" value="NC_009617.1"/>
</dbReference>
<dbReference type="SMR" id="A6LQ87"/>
<dbReference type="GeneID" id="66343206"/>
<dbReference type="KEGG" id="cbe:Cbei_0329"/>
<dbReference type="eggNOG" id="COG0459">
    <property type="taxonomic scope" value="Bacteria"/>
</dbReference>
<dbReference type="HOGENOM" id="CLU_016503_3_0_9"/>
<dbReference type="Proteomes" id="UP000000565">
    <property type="component" value="Chromosome"/>
</dbReference>
<dbReference type="GO" id="GO:0005737">
    <property type="term" value="C:cytoplasm"/>
    <property type="evidence" value="ECO:0007669"/>
    <property type="project" value="UniProtKB-SubCell"/>
</dbReference>
<dbReference type="GO" id="GO:0005524">
    <property type="term" value="F:ATP binding"/>
    <property type="evidence" value="ECO:0007669"/>
    <property type="project" value="UniProtKB-UniRule"/>
</dbReference>
<dbReference type="GO" id="GO:0140662">
    <property type="term" value="F:ATP-dependent protein folding chaperone"/>
    <property type="evidence" value="ECO:0007669"/>
    <property type="project" value="InterPro"/>
</dbReference>
<dbReference type="GO" id="GO:0016853">
    <property type="term" value="F:isomerase activity"/>
    <property type="evidence" value="ECO:0007669"/>
    <property type="project" value="UniProtKB-KW"/>
</dbReference>
<dbReference type="GO" id="GO:0051082">
    <property type="term" value="F:unfolded protein binding"/>
    <property type="evidence" value="ECO:0007669"/>
    <property type="project" value="UniProtKB-UniRule"/>
</dbReference>
<dbReference type="GO" id="GO:0042026">
    <property type="term" value="P:protein refolding"/>
    <property type="evidence" value="ECO:0007669"/>
    <property type="project" value="UniProtKB-UniRule"/>
</dbReference>
<dbReference type="CDD" id="cd03344">
    <property type="entry name" value="GroEL"/>
    <property type="match status" value="1"/>
</dbReference>
<dbReference type="FunFam" id="3.50.7.10:FF:000001">
    <property type="entry name" value="60 kDa chaperonin"/>
    <property type="match status" value="1"/>
</dbReference>
<dbReference type="Gene3D" id="3.50.7.10">
    <property type="entry name" value="GroEL"/>
    <property type="match status" value="1"/>
</dbReference>
<dbReference type="Gene3D" id="1.10.560.10">
    <property type="entry name" value="GroEL-like equatorial domain"/>
    <property type="match status" value="1"/>
</dbReference>
<dbReference type="Gene3D" id="3.30.260.10">
    <property type="entry name" value="TCP-1-like chaperonin intermediate domain"/>
    <property type="match status" value="1"/>
</dbReference>
<dbReference type="HAMAP" id="MF_00600">
    <property type="entry name" value="CH60"/>
    <property type="match status" value="1"/>
</dbReference>
<dbReference type="InterPro" id="IPR018370">
    <property type="entry name" value="Chaperonin_Cpn60_CS"/>
</dbReference>
<dbReference type="InterPro" id="IPR001844">
    <property type="entry name" value="Cpn60/GroEL"/>
</dbReference>
<dbReference type="InterPro" id="IPR002423">
    <property type="entry name" value="Cpn60/GroEL/TCP-1"/>
</dbReference>
<dbReference type="InterPro" id="IPR027409">
    <property type="entry name" value="GroEL-like_apical_dom_sf"/>
</dbReference>
<dbReference type="InterPro" id="IPR027413">
    <property type="entry name" value="GROEL-like_equatorial_sf"/>
</dbReference>
<dbReference type="InterPro" id="IPR027410">
    <property type="entry name" value="TCP-1-like_intermed_sf"/>
</dbReference>
<dbReference type="NCBIfam" id="TIGR02348">
    <property type="entry name" value="GroEL"/>
    <property type="match status" value="1"/>
</dbReference>
<dbReference type="NCBIfam" id="NF000592">
    <property type="entry name" value="PRK00013.1"/>
    <property type="match status" value="1"/>
</dbReference>
<dbReference type="NCBIfam" id="NF009487">
    <property type="entry name" value="PRK12849.1"/>
    <property type="match status" value="1"/>
</dbReference>
<dbReference type="NCBIfam" id="NF009488">
    <property type="entry name" value="PRK12850.1"/>
    <property type="match status" value="1"/>
</dbReference>
<dbReference type="NCBIfam" id="NF009489">
    <property type="entry name" value="PRK12851.1"/>
    <property type="match status" value="1"/>
</dbReference>
<dbReference type="PANTHER" id="PTHR45633">
    <property type="entry name" value="60 KDA HEAT SHOCK PROTEIN, MITOCHONDRIAL"/>
    <property type="match status" value="1"/>
</dbReference>
<dbReference type="Pfam" id="PF00118">
    <property type="entry name" value="Cpn60_TCP1"/>
    <property type="match status" value="1"/>
</dbReference>
<dbReference type="PRINTS" id="PR00298">
    <property type="entry name" value="CHAPERONIN60"/>
</dbReference>
<dbReference type="SUPFAM" id="SSF52029">
    <property type="entry name" value="GroEL apical domain-like"/>
    <property type="match status" value="1"/>
</dbReference>
<dbReference type="SUPFAM" id="SSF48592">
    <property type="entry name" value="GroEL equatorial domain-like"/>
    <property type="match status" value="1"/>
</dbReference>
<dbReference type="SUPFAM" id="SSF54849">
    <property type="entry name" value="GroEL-intermediate domain like"/>
    <property type="match status" value="1"/>
</dbReference>
<dbReference type="PROSITE" id="PS00296">
    <property type="entry name" value="CHAPERONINS_CPN60"/>
    <property type="match status" value="1"/>
</dbReference>
<comment type="function">
    <text evidence="1">Together with its co-chaperonin GroES, plays an essential role in assisting protein folding. The GroEL-GroES system forms a nano-cage that allows encapsulation of the non-native substrate proteins and provides a physical environment optimized to promote and accelerate protein folding.</text>
</comment>
<comment type="catalytic activity">
    <reaction evidence="1">
        <text>ATP + H2O + a folded polypeptide = ADP + phosphate + an unfolded polypeptide.</text>
        <dbReference type="EC" id="5.6.1.7"/>
    </reaction>
</comment>
<comment type="subunit">
    <text evidence="1">Forms a cylinder of 14 subunits composed of two heptameric rings stacked back-to-back. Interacts with the co-chaperonin GroES.</text>
</comment>
<comment type="subcellular location">
    <subcellularLocation>
        <location evidence="1">Cytoplasm</location>
    </subcellularLocation>
</comment>
<comment type="similarity">
    <text evidence="1">Belongs to the chaperonin (HSP60) family.</text>
</comment>
<accession>A6LQ87</accession>
<gene>
    <name evidence="1" type="primary">groEL</name>
    <name evidence="1" type="synonym">groL</name>
    <name type="ordered locus">Cbei_0329</name>
</gene>
<feature type="chain" id="PRO_1000082467" description="Chaperonin GroEL">
    <location>
        <begin position="1"/>
        <end position="541"/>
    </location>
</feature>
<feature type="binding site" evidence="1">
    <location>
        <begin position="29"/>
        <end position="32"/>
    </location>
    <ligand>
        <name>ATP</name>
        <dbReference type="ChEBI" id="CHEBI:30616"/>
    </ligand>
</feature>
<feature type="binding site" evidence="1">
    <location>
        <begin position="86"/>
        <end position="90"/>
    </location>
    <ligand>
        <name>ATP</name>
        <dbReference type="ChEBI" id="CHEBI:30616"/>
    </ligand>
</feature>
<feature type="binding site" evidence="1">
    <location>
        <position position="413"/>
    </location>
    <ligand>
        <name>ATP</name>
        <dbReference type="ChEBI" id="CHEBI:30616"/>
    </ligand>
</feature>
<feature type="binding site" evidence="1">
    <location>
        <begin position="477"/>
        <end position="479"/>
    </location>
    <ligand>
        <name>ATP</name>
        <dbReference type="ChEBI" id="CHEBI:30616"/>
    </ligand>
</feature>
<feature type="binding site" evidence="1">
    <location>
        <position position="493"/>
    </location>
    <ligand>
        <name>ATP</name>
        <dbReference type="ChEBI" id="CHEBI:30616"/>
    </ligand>
</feature>